<name>RL19_STRAW</name>
<comment type="function">
    <text evidence="1">This protein is located at the 30S-50S ribosomal subunit interface and may play a role in the structure and function of the aminoacyl-tRNA binding site.</text>
</comment>
<comment type="similarity">
    <text evidence="1">Belongs to the bacterial ribosomal protein bL19 family.</text>
</comment>
<reference key="1">
    <citation type="journal article" date="2001" name="Proc. Natl. Acad. Sci. U.S.A.">
        <title>Genome sequence of an industrial microorganism Streptomyces avermitilis: deducing the ability of producing secondary metabolites.</title>
        <authorList>
            <person name="Omura S."/>
            <person name="Ikeda H."/>
            <person name="Ishikawa J."/>
            <person name="Hanamoto A."/>
            <person name="Takahashi C."/>
            <person name="Shinose M."/>
            <person name="Takahashi Y."/>
            <person name="Horikawa H."/>
            <person name="Nakazawa H."/>
            <person name="Osonoe T."/>
            <person name="Kikuchi H."/>
            <person name="Shiba T."/>
            <person name="Sakaki Y."/>
            <person name="Hattori M."/>
        </authorList>
    </citation>
    <scope>NUCLEOTIDE SEQUENCE [LARGE SCALE GENOMIC DNA]</scope>
    <source>
        <strain>ATCC 31267 / DSM 46492 / JCM 5070 / NBRC 14893 / NCIMB 12804 / NRRL 8165 / MA-4680</strain>
    </source>
</reference>
<reference key="2">
    <citation type="journal article" date="2003" name="Nat. Biotechnol.">
        <title>Complete genome sequence and comparative analysis of the industrial microorganism Streptomyces avermitilis.</title>
        <authorList>
            <person name="Ikeda H."/>
            <person name="Ishikawa J."/>
            <person name="Hanamoto A."/>
            <person name="Shinose M."/>
            <person name="Kikuchi H."/>
            <person name="Shiba T."/>
            <person name="Sakaki Y."/>
            <person name="Hattori M."/>
            <person name="Omura S."/>
        </authorList>
    </citation>
    <scope>NUCLEOTIDE SEQUENCE [LARGE SCALE GENOMIC DNA]</scope>
    <source>
        <strain>ATCC 31267 / DSM 46492 / JCM 5070 / NBRC 14893 / NCIMB 12804 / NRRL 8165 / MA-4680</strain>
    </source>
</reference>
<keyword id="KW-1185">Reference proteome</keyword>
<keyword id="KW-0687">Ribonucleoprotein</keyword>
<keyword id="KW-0689">Ribosomal protein</keyword>
<sequence>MSHLLDSVDSASLRSDLPAFRPGDTVNVHVRVIEGNRSRVQQFKGVVIRRQGAGVRETFTVRKVSFSVGVERTFPVHTPIVEKIELVTRGDVRRAKLYYLRELRGKAAKIKEKRES</sequence>
<dbReference type="EMBL" id="BA000030">
    <property type="protein sequence ID" value="BAC70351.1"/>
    <property type="molecule type" value="Genomic_DNA"/>
</dbReference>
<dbReference type="RefSeq" id="WP_010984075.1">
    <property type="nucleotide sequence ID" value="NZ_JZJK01000071.1"/>
</dbReference>
<dbReference type="SMR" id="Q82JW4"/>
<dbReference type="GeneID" id="41539722"/>
<dbReference type="KEGG" id="sma:SAVERM_2640"/>
<dbReference type="eggNOG" id="COG0335">
    <property type="taxonomic scope" value="Bacteria"/>
</dbReference>
<dbReference type="HOGENOM" id="CLU_103507_2_1_11"/>
<dbReference type="OrthoDB" id="9803541at2"/>
<dbReference type="Proteomes" id="UP000000428">
    <property type="component" value="Chromosome"/>
</dbReference>
<dbReference type="GO" id="GO:0022625">
    <property type="term" value="C:cytosolic large ribosomal subunit"/>
    <property type="evidence" value="ECO:0007669"/>
    <property type="project" value="TreeGrafter"/>
</dbReference>
<dbReference type="GO" id="GO:0003735">
    <property type="term" value="F:structural constituent of ribosome"/>
    <property type="evidence" value="ECO:0007669"/>
    <property type="project" value="InterPro"/>
</dbReference>
<dbReference type="GO" id="GO:0006412">
    <property type="term" value="P:translation"/>
    <property type="evidence" value="ECO:0007669"/>
    <property type="project" value="UniProtKB-UniRule"/>
</dbReference>
<dbReference type="FunFam" id="2.30.30.790:FF:000001">
    <property type="entry name" value="50S ribosomal protein L19"/>
    <property type="match status" value="1"/>
</dbReference>
<dbReference type="Gene3D" id="2.30.30.790">
    <property type="match status" value="1"/>
</dbReference>
<dbReference type="HAMAP" id="MF_00402">
    <property type="entry name" value="Ribosomal_bL19"/>
    <property type="match status" value="1"/>
</dbReference>
<dbReference type="InterPro" id="IPR001857">
    <property type="entry name" value="Ribosomal_bL19"/>
</dbReference>
<dbReference type="InterPro" id="IPR018257">
    <property type="entry name" value="Ribosomal_bL19_CS"/>
</dbReference>
<dbReference type="InterPro" id="IPR038657">
    <property type="entry name" value="Ribosomal_bL19_sf"/>
</dbReference>
<dbReference type="InterPro" id="IPR008991">
    <property type="entry name" value="Translation_prot_SH3-like_sf"/>
</dbReference>
<dbReference type="NCBIfam" id="TIGR01024">
    <property type="entry name" value="rplS_bact"/>
    <property type="match status" value="1"/>
</dbReference>
<dbReference type="PANTHER" id="PTHR15680:SF9">
    <property type="entry name" value="LARGE RIBOSOMAL SUBUNIT PROTEIN BL19M"/>
    <property type="match status" value="1"/>
</dbReference>
<dbReference type="PANTHER" id="PTHR15680">
    <property type="entry name" value="RIBOSOMAL PROTEIN L19"/>
    <property type="match status" value="1"/>
</dbReference>
<dbReference type="Pfam" id="PF01245">
    <property type="entry name" value="Ribosomal_L19"/>
    <property type="match status" value="1"/>
</dbReference>
<dbReference type="PIRSF" id="PIRSF002191">
    <property type="entry name" value="Ribosomal_L19"/>
    <property type="match status" value="1"/>
</dbReference>
<dbReference type="PRINTS" id="PR00061">
    <property type="entry name" value="RIBOSOMALL19"/>
</dbReference>
<dbReference type="SUPFAM" id="SSF50104">
    <property type="entry name" value="Translation proteins SH3-like domain"/>
    <property type="match status" value="1"/>
</dbReference>
<dbReference type="PROSITE" id="PS01015">
    <property type="entry name" value="RIBOSOMAL_L19"/>
    <property type="match status" value="1"/>
</dbReference>
<feature type="chain" id="PRO_0000163538" description="Large ribosomal subunit protein bL19">
    <location>
        <begin position="1"/>
        <end position="116"/>
    </location>
</feature>
<evidence type="ECO:0000255" key="1">
    <source>
        <dbReference type="HAMAP-Rule" id="MF_00402"/>
    </source>
</evidence>
<evidence type="ECO:0000305" key="2"/>
<accession>Q82JW4</accession>
<gene>
    <name evidence="1" type="primary">rplS</name>
    <name type="ordered locus">SAV_2640</name>
</gene>
<proteinExistence type="inferred from homology"/>
<protein>
    <recommendedName>
        <fullName evidence="1">Large ribosomal subunit protein bL19</fullName>
    </recommendedName>
    <alternativeName>
        <fullName evidence="2">50S ribosomal protein L19</fullName>
    </alternativeName>
</protein>
<organism>
    <name type="scientific">Streptomyces avermitilis (strain ATCC 31267 / DSM 46492 / JCM 5070 / NBRC 14893 / NCIMB 12804 / NRRL 8165 / MA-4680)</name>
    <dbReference type="NCBI Taxonomy" id="227882"/>
    <lineage>
        <taxon>Bacteria</taxon>
        <taxon>Bacillati</taxon>
        <taxon>Actinomycetota</taxon>
        <taxon>Actinomycetes</taxon>
        <taxon>Kitasatosporales</taxon>
        <taxon>Streptomycetaceae</taxon>
        <taxon>Streptomyces</taxon>
    </lineage>
</organism>